<proteinExistence type="evidence at protein level"/>
<name>OLM2B_HUMAN</name>
<gene>
    <name type="primary">OLFML2B</name>
</gene>
<protein>
    <recommendedName>
        <fullName>Olfactomedin-like protein 2B</fullName>
    </recommendedName>
    <alternativeName>
        <fullName>Photomedin-2</fullName>
    </alternativeName>
</protein>
<organism>
    <name type="scientific">Homo sapiens</name>
    <name type="common">Human</name>
    <dbReference type="NCBI Taxonomy" id="9606"/>
    <lineage>
        <taxon>Eukaryota</taxon>
        <taxon>Metazoa</taxon>
        <taxon>Chordata</taxon>
        <taxon>Craniata</taxon>
        <taxon>Vertebrata</taxon>
        <taxon>Euteleostomi</taxon>
        <taxon>Mammalia</taxon>
        <taxon>Eutheria</taxon>
        <taxon>Euarchontoglires</taxon>
        <taxon>Primates</taxon>
        <taxon>Haplorrhini</taxon>
        <taxon>Catarrhini</taxon>
        <taxon>Hominidae</taxon>
        <taxon>Homo</taxon>
    </lineage>
</organism>
<evidence type="ECO:0000250" key="1"/>
<evidence type="ECO:0000255" key="2"/>
<evidence type="ECO:0000255" key="3">
    <source>
        <dbReference type="PROSITE-ProRule" id="PRU00446"/>
    </source>
</evidence>
<evidence type="ECO:0000256" key="4">
    <source>
        <dbReference type="SAM" id="MobiDB-lite"/>
    </source>
</evidence>
<evidence type="ECO:0000269" key="5">
    <source>
    </source>
</evidence>
<evidence type="ECO:0000269" key="6">
    <source ref="1"/>
</evidence>
<evidence type="ECO:0000303" key="7">
    <source>
    </source>
</evidence>
<keyword id="KW-0025">Alternative splicing</keyword>
<keyword id="KW-0175">Coiled coil</keyword>
<keyword id="KW-1015">Disulfide bond</keyword>
<keyword id="KW-0325">Glycoprotein</keyword>
<keyword id="KW-1267">Proteomics identification</keyword>
<keyword id="KW-1185">Reference proteome</keyword>
<keyword id="KW-0964">Secreted</keyword>
<keyword id="KW-0732">Signal</keyword>
<sequence>MAKPRLLVLYFALIVVPAWVSSIVLTGTSEPPDAQTVAPAEDETLQNEADNQENVLSQLLGDYDKVKAMSEGSDCQCKCVVRPLGRDACQRINAGASRKEDFYTVETITSGSSCKCACVAPPSALNPCEGDFRLQKLREADSQDLKLSTIIDMLEGAFYGLDLLKLHSVTTKLVGRVDKLEEEVSKNLTKENEQIKEDMEEIRTEMNKRGKENCSENILDSMPDIRSALQRDAAAAYAHPEYEERFLQEETVSQQINSIELLQTRPLALPEVVKSQRPLQRQVHLRGRPASQPTVIRGITYYKAKVSEEENDIEEQQDEFFSGDNGVDLLIEDQLLRHNGLMTSVTRRPAATRQGHSTAVTSDLNARTAPWSSALPQPSTSDPSIANHASVGPTLQTTSVSPDPTRESVLQPSPQVPATTVAHTATQQPAAPAPPAVSPREALMEAMHTVPVPPTTVRTDSLGKDAPAGWGTTPASPTLSPEEEDDIRNVIGRCKDTLSTITGPTTQNTYGRNEGAWMKDPLAKDERIYVTNYYYGNTLVEFRNLENFKQGRWSNSYKLPYSWIGTGHVVYNGAFYYNRAFTRNIIKYDLKQRYVAAWAMLHDVAYEEATPWRWQGHSDVDFAVDENGLWLIYPALDDEGFSQEVIVLSKLNAADLSTQKETTWRTGLRRNFYGNCFVICGVLYAVDSYNQRNANISYAFDTHTNTQIVPRLLFENEYSYTTQIDYNPKDRLLYAWDNGHQVTYHVIFAY</sequence>
<reference key="1">
    <citation type="submission" date="2003-09" db="EMBL/GenBank/DDBJ databases">
        <title>Photomedin-1 and -2, novel extracellular glycoproteins with olfactomedin domain, isolated from RIKEN full-length mouse cDNA clones by computational screening.</title>
        <authorList>
            <person name="Furutani Y."/>
            <person name="Manabe R."/>
            <person name="Tsutsui K."/>
            <person name="Yamada T."/>
            <person name="Sugimoto N."/>
            <person name="Kawai J."/>
            <person name="Hayashizaki Y."/>
            <person name="Sekiguchi K."/>
        </authorList>
    </citation>
    <scope>NUCLEOTIDE SEQUENCE [MRNA] (ISOFORM 1)</scope>
    <scope>VARIANT ARG-470</scope>
    <source>
        <tissue>Retina</tissue>
    </source>
</reference>
<reference key="2">
    <citation type="journal article" date="2004" name="Nat. Genet.">
        <title>Complete sequencing and characterization of 21,243 full-length human cDNAs.</title>
        <authorList>
            <person name="Ota T."/>
            <person name="Suzuki Y."/>
            <person name="Nishikawa T."/>
            <person name="Otsuki T."/>
            <person name="Sugiyama T."/>
            <person name="Irie R."/>
            <person name="Wakamatsu A."/>
            <person name="Hayashi K."/>
            <person name="Sato H."/>
            <person name="Nagai K."/>
            <person name="Kimura K."/>
            <person name="Makita H."/>
            <person name="Sekine M."/>
            <person name="Obayashi M."/>
            <person name="Nishi T."/>
            <person name="Shibahara T."/>
            <person name="Tanaka T."/>
            <person name="Ishii S."/>
            <person name="Yamamoto J."/>
            <person name="Saito K."/>
            <person name="Kawai Y."/>
            <person name="Isono Y."/>
            <person name="Nakamura Y."/>
            <person name="Nagahari K."/>
            <person name="Murakami K."/>
            <person name="Yasuda T."/>
            <person name="Iwayanagi T."/>
            <person name="Wagatsuma M."/>
            <person name="Shiratori A."/>
            <person name="Sudo H."/>
            <person name="Hosoiri T."/>
            <person name="Kaku Y."/>
            <person name="Kodaira H."/>
            <person name="Kondo H."/>
            <person name="Sugawara M."/>
            <person name="Takahashi M."/>
            <person name="Kanda K."/>
            <person name="Yokoi T."/>
            <person name="Furuya T."/>
            <person name="Kikkawa E."/>
            <person name="Omura Y."/>
            <person name="Abe K."/>
            <person name="Kamihara K."/>
            <person name="Katsuta N."/>
            <person name="Sato K."/>
            <person name="Tanikawa M."/>
            <person name="Yamazaki M."/>
            <person name="Ninomiya K."/>
            <person name="Ishibashi T."/>
            <person name="Yamashita H."/>
            <person name="Murakawa K."/>
            <person name="Fujimori K."/>
            <person name="Tanai H."/>
            <person name="Kimata M."/>
            <person name="Watanabe M."/>
            <person name="Hiraoka S."/>
            <person name="Chiba Y."/>
            <person name="Ishida S."/>
            <person name="Ono Y."/>
            <person name="Takiguchi S."/>
            <person name="Watanabe S."/>
            <person name="Yosida M."/>
            <person name="Hotuta T."/>
            <person name="Kusano J."/>
            <person name="Kanehori K."/>
            <person name="Takahashi-Fujii A."/>
            <person name="Hara H."/>
            <person name="Tanase T.-O."/>
            <person name="Nomura Y."/>
            <person name="Togiya S."/>
            <person name="Komai F."/>
            <person name="Hara R."/>
            <person name="Takeuchi K."/>
            <person name="Arita M."/>
            <person name="Imose N."/>
            <person name="Musashino K."/>
            <person name="Yuuki H."/>
            <person name="Oshima A."/>
            <person name="Sasaki N."/>
            <person name="Aotsuka S."/>
            <person name="Yoshikawa Y."/>
            <person name="Matsunawa H."/>
            <person name="Ichihara T."/>
            <person name="Shiohata N."/>
            <person name="Sano S."/>
            <person name="Moriya S."/>
            <person name="Momiyama H."/>
            <person name="Satoh N."/>
            <person name="Takami S."/>
            <person name="Terashima Y."/>
            <person name="Suzuki O."/>
            <person name="Nakagawa S."/>
            <person name="Senoh A."/>
            <person name="Mizoguchi H."/>
            <person name="Goto Y."/>
            <person name="Shimizu F."/>
            <person name="Wakebe H."/>
            <person name="Hishigaki H."/>
            <person name="Watanabe T."/>
            <person name="Sugiyama A."/>
            <person name="Takemoto M."/>
            <person name="Kawakami B."/>
            <person name="Yamazaki M."/>
            <person name="Watanabe K."/>
            <person name="Kumagai A."/>
            <person name="Itakura S."/>
            <person name="Fukuzumi Y."/>
            <person name="Fujimori Y."/>
            <person name="Komiyama M."/>
            <person name="Tashiro H."/>
            <person name="Tanigami A."/>
            <person name="Fujiwara T."/>
            <person name="Ono T."/>
            <person name="Yamada K."/>
            <person name="Fujii Y."/>
            <person name="Ozaki K."/>
            <person name="Hirao M."/>
            <person name="Ohmori Y."/>
            <person name="Kawabata A."/>
            <person name="Hikiji T."/>
            <person name="Kobatake N."/>
            <person name="Inagaki H."/>
            <person name="Ikema Y."/>
            <person name="Okamoto S."/>
            <person name="Okitani R."/>
            <person name="Kawakami T."/>
            <person name="Noguchi S."/>
            <person name="Itoh T."/>
            <person name="Shigeta K."/>
            <person name="Senba T."/>
            <person name="Matsumura K."/>
            <person name="Nakajima Y."/>
            <person name="Mizuno T."/>
            <person name="Morinaga M."/>
            <person name="Sasaki M."/>
            <person name="Togashi T."/>
            <person name="Oyama M."/>
            <person name="Hata H."/>
            <person name="Watanabe M."/>
            <person name="Komatsu T."/>
            <person name="Mizushima-Sugano J."/>
            <person name="Satoh T."/>
            <person name="Shirai Y."/>
            <person name="Takahashi Y."/>
            <person name="Nakagawa K."/>
            <person name="Okumura K."/>
            <person name="Nagase T."/>
            <person name="Nomura N."/>
            <person name="Kikuchi H."/>
            <person name="Masuho Y."/>
            <person name="Yamashita R."/>
            <person name="Nakai K."/>
            <person name="Yada T."/>
            <person name="Nakamura Y."/>
            <person name="Ohara O."/>
            <person name="Isogai T."/>
            <person name="Sugano S."/>
        </authorList>
    </citation>
    <scope>NUCLEOTIDE SEQUENCE [LARGE SCALE MRNA] (ISOFORM 1)</scope>
</reference>
<reference key="3">
    <citation type="journal article" date="2007" name="BMC Genomics">
        <title>The full-ORF clone resource of the German cDNA consortium.</title>
        <authorList>
            <person name="Bechtel S."/>
            <person name="Rosenfelder H."/>
            <person name="Duda A."/>
            <person name="Schmidt C.P."/>
            <person name="Ernst U."/>
            <person name="Wellenreuther R."/>
            <person name="Mehrle A."/>
            <person name="Schuster C."/>
            <person name="Bahr A."/>
            <person name="Bloecker H."/>
            <person name="Heubner D."/>
            <person name="Hoerlein A."/>
            <person name="Michel G."/>
            <person name="Wedler H."/>
            <person name="Koehrer K."/>
            <person name="Ottenwaelder B."/>
            <person name="Poustka A."/>
            <person name="Wiemann S."/>
            <person name="Schupp I."/>
        </authorList>
    </citation>
    <scope>NUCLEOTIDE SEQUENCE [LARGE SCALE MRNA] (ISOFORM 1)</scope>
    <scope>VARIANT ARG-470</scope>
    <source>
        <tissue>Endometrium</tissue>
        <tissue>Uterus</tissue>
    </source>
</reference>
<reference key="4">
    <citation type="journal article" date="2006" name="Nature">
        <title>The DNA sequence and biological annotation of human chromosome 1.</title>
        <authorList>
            <person name="Gregory S.G."/>
            <person name="Barlow K.F."/>
            <person name="McLay K.E."/>
            <person name="Kaul R."/>
            <person name="Swarbreck D."/>
            <person name="Dunham A."/>
            <person name="Scott C.E."/>
            <person name="Howe K.L."/>
            <person name="Woodfine K."/>
            <person name="Spencer C.C.A."/>
            <person name="Jones M.C."/>
            <person name="Gillson C."/>
            <person name="Searle S."/>
            <person name="Zhou Y."/>
            <person name="Kokocinski F."/>
            <person name="McDonald L."/>
            <person name="Evans R."/>
            <person name="Phillips K."/>
            <person name="Atkinson A."/>
            <person name="Cooper R."/>
            <person name="Jones C."/>
            <person name="Hall R.E."/>
            <person name="Andrews T.D."/>
            <person name="Lloyd C."/>
            <person name="Ainscough R."/>
            <person name="Almeida J.P."/>
            <person name="Ambrose K.D."/>
            <person name="Anderson F."/>
            <person name="Andrew R.W."/>
            <person name="Ashwell R.I.S."/>
            <person name="Aubin K."/>
            <person name="Babbage A.K."/>
            <person name="Bagguley C.L."/>
            <person name="Bailey J."/>
            <person name="Beasley H."/>
            <person name="Bethel G."/>
            <person name="Bird C.P."/>
            <person name="Bray-Allen S."/>
            <person name="Brown J.Y."/>
            <person name="Brown A.J."/>
            <person name="Buckley D."/>
            <person name="Burton J."/>
            <person name="Bye J."/>
            <person name="Carder C."/>
            <person name="Chapman J.C."/>
            <person name="Clark S.Y."/>
            <person name="Clarke G."/>
            <person name="Clee C."/>
            <person name="Cobley V."/>
            <person name="Collier R.E."/>
            <person name="Corby N."/>
            <person name="Coville G.J."/>
            <person name="Davies J."/>
            <person name="Deadman R."/>
            <person name="Dunn M."/>
            <person name="Earthrowl M."/>
            <person name="Ellington A.G."/>
            <person name="Errington H."/>
            <person name="Frankish A."/>
            <person name="Frankland J."/>
            <person name="French L."/>
            <person name="Garner P."/>
            <person name="Garnett J."/>
            <person name="Gay L."/>
            <person name="Ghori M.R.J."/>
            <person name="Gibson R."/>
            <person name="Gilby L.M."/>
            <person name="Gillett W."/>
            <person name="Glithero R.J."/>
            <person name="Grafham D.V."/>
            <person name="Griffiths C."/>
            <person name="Griffiths-Jones S."/>
            <person name="Grocock R."/>
            <person name="Hammond S."/>
            <person name="Harrison E.S.I."/>
            <person name="Hart E."/>
            <person name="Haugen E."/>
            <person name="Heath P.D."/>
            <person name="Holmes S."/>
            <person name="Holt K."/>
            <person name="Howden P.J."/>
            <person name="Hunt A.R."/>
            <person name="Hunt S.E."/>
            <person name="Hunter G."/>
            <person name="Isherwood J."/>
            <person name="James R."/>
            <person name="Johnson C."/>
            <person name="Johnson D."/>
            <person name="Joy A."/>
            <person name="Kay M."/>
            <person name="Kershaw J.K."/>
            <person name="Kibukawa M."/>
            <person name="Kimberley A.M."/>
            <person name="King A."/>
            <person name="Knights A.J."/>
            <person name="Lad H."/>
            <person name="Laird G."/>
            <person name="Lawlor S."/>
            <person name="Leongamornlert D.A."/>
            <person name="Lloyd D.M."/>
            <person name="Loveland J."/>
            <person name="Lovell J."/>
            <person name="Lush M.J."/>
            <person name="Lyne R."/>
            <person name="Martin S."/>
            <person name="Mashreghi-Mohammadi M."/>
            <person name="Matthews L."/>
            <person name="Matthews N.S.W."/>
            <person name="McLaren S."/>
            <person name="Milne S."/>
            <person name="Mistry S."/>
            <person name="Moore M.J.F."/>
            <person name="Nickerson T."/>
            <person name="O'Dell C.N."/>
            <person name="Oliver K."/>
            <person name="Palmeiri A."/>
            <person name="Palmer S.A."/>
            <person name="Parker A."/>
            <person name="Patel D."/>
            <person name="Pearce A.V."/>
            <person name="Peck A.I."/>
            <person name="Pelan S."/>
            <person name="Phelps K."/>
            <person name="Phillimore B.J."/>
            <person name="Plumb R."/>
            <person name="Rajan J."/>
            <person name="Raymond C."/>
            <person name="Rouse G."/>
            <person name="Saenphimmachak C."/>
            <person name="Sehra H.K."/>
            <person name="Sheridan E."/>
            <person name="Shownkeen R."/>
            <person name="Sims S."/>
            <person name="Skuce C.D."/>
            <person name="Smith M."/>
            <person name="Steward C."/>
            <person name="Subramanian S."/>
            <person name="Sycamore N."/>
            <person name="Tracey A."/>
            <person name="Tromans A."/>
            <person name="Van Helmond Z."/>
            <person name="Wall M."/>
            <person name="Wallis J.M."/>
            <person name="White S."/>
            <person name="Whitehead S.L."/>
            <person name="Wilkinson J.E."/>
            <person name="Willey D.L."/>
            <person name="Williams H."/>
            <person name="Wilming L."/>
            <person name="Wray P.W."/>
            <person name="Wu Z."/>
            <person name="Coulson A."/>
            <person name="Vaudin M."/>
            <person name="Sulston J.E."/>
            <person name="Durbin R.M."/>
            <person name="Hubbard T."/>
            <person name="Wooster R."/>
            <person name="Dunham I."/>
            <person name="Carter N.P."/>
            <person name="McVean G."/>
            <person name="Ross M.T."/>
            <person name="Harrow J."/>
            <person name="Olson M.V."/>
            <person name="Beck S."/>
            <person name="Rogers J."/>
            <person name="Bentley D.R."/>
        </authorList>
    </citation>
    <scope>NUCLEOTIDE SEQUENCE [LARGE SCALE GENOMIC DNA]</scope>
</reference>
<reference key="5">
    <citation type="journal article" date="2004" name="Genome Res.">
        <title>The status, quality, and expansion of the NIH full-length cDNA project: the Mammalian Gene Collection (MGC).</title>
        <authorList>
            <consortium name="The MGC Project Team"/>
        </authorList>
    </citation>
    <scope>NUCLEOTIDE SEQUENCE [LARGE SCALE MRNA] (ISOFORMS 1 AND 2)</scope>
    <source>
        <tissue>PNS</tissue>
        <tissue>Testis</tissue>
    </source>
</reference>
<dbReference type="EMBL" id="AB119054">
    <property type="protein sequence ID" value="BAD38863.1"/>
    <property type="molecule type" value="mRNA"/>
</dbReference>
<dbReference type="EMBL" id="AK316154">
    <property type="protein sequence ID" value="BAH14525.1"/>
    <property type="molecule type" value="mRNA"/>
</dbReference>
<dbReference type="EMBL" id="BX648975">
    <property type="protein sequence ID" value="CAI45982.1"/>
    <property type="molecule type" value="mRNA"/>
</dbReference>
<dbReference type="EMBL" id="AL050137">
    <property type="protein sequence ID" value="CAB43286.1"/>
    <property type="molecule type" value="mRNA"/>
</dbReference>
<dbReference type="EMBL" id="AL391825">
    <property type="status" value="NOT_ANNOTATED_CDS"/>
    <property type="molecule type" value="Genomic_DNA"/>
</dbReference>
<dbReference type="EMBL" id="AL590408">
    <property type="status" value="NOT_ANNOTATED_CDS"/>
    <property type="molecule type" value="Genomic_DNA"/>
</dbReference>
<dbReference type="EMBL" id="BC047472">
    <property type="protein sequence ID" value="AAH47472.1"/>
    <property type="molecule type" value="mRNA"/>
</dbReference>
<dbReference type="EMBL" id="BC067274">
    <property type="protein sequence ID" value="AAH67274.1"/>
    <property type="molecule type" value="mRNA"/>
</dbReference>
<dbReference type="CCDS" id="CCDS1236.1">
    <molecule id="Q68BL8-1"/>
</dbReference>
<dbReference type="PIR" id="T08771">
    <property type="entry name" value="T08771"/>
</dbReference>
<dbReference type="RefSeq" id="NP_001284642.1">
    <property type="nucleotide sequence ID" value="NM_001297713.1"/>
</dbReference>
<dbReference type="RefSeq" id="NP_001334629.1">
    <property type="nucleotide sequence ID" value="NM_001347700.1"/>
</dbReference>
<dbReference type="RefSeq" id="NP_056256.1">
    <molecule id="Q68BL8-1"/>
    <property type="nucleotide sequence ID" value="NM_015441.3"/>
</dbReference>
<dbReference type="SMR" id="Q68BL8"/>
<dbReference type="BioGRID" id="117410">
    <property type="interactions" value="16"/>
</dbReference>
<dbReference type="FunCoup" id="Q68BL8">
    <property type="interactions" value="269"/>
</dbReference>
<dbReference type="IntAct" id="Q68BL8">
    <property type="interactions" value="6"/>
</dbReference>
<dbReference type="STRING" id="9606.ENSP00000356917"/>
<dbReference type="GlyCosmos" id="Q68BL8">
    <property type="glycosylation" value="5 sites, 1 glycan"/>
</dbReference>
<dbReference type="GlyGen" id="Q68BL8">
    <property type="glycosylation" value="12 sites, 2 N-linked glycans (2 sites), 3 O-linked glycans (8 sites)"/>
</dbReference>
<dbReference type="iPTMnet" id="Q68BL8"/>
<dbReference type="PhosphoSitePlus" id="Q68BL8"/>
<dbReference type="BioMuta" id="OLFML2B"/>
<dbReference type="DMDM" id="160418997"/>
<dbReference type="jPOST" id="Q68BL8"/>
<dbReference type="MassIVE" id="Q68BL8"/>
<dbReference type="PaxDb" id="9606-ENSP00000356917"/>
<dbReference type="PeptideAtlas" id="Q68BL8"/>
<dbReference type="ProteomicsDB" id="65999">
    <molecule id="Q68BL8-1"/>
</dbReference>
<dbReference type="ProteomicsDB" id="66000">
    <molecule id="Q68BL8-2"/>
</dbReference>
<dbReference type="TopDownProteomics" id="Q68BL8-1">
    <molecule id="Q68BL8-1"/>
</dbReference>
<dbReference type="Antibodypedia" id="34317">
    <property type="antibodies" value="138 antibodies from 21 providers"/>
</dbReference>
<dbReference type="DNASU" id="25903"/>
<dbReference type="Ensembl" id="ENST00000294794.8">
    <molecule id="Q68BL8-1"/>
    <property type="protein sequence ID" value="ENSP00000294794.3"/>
    <property type="gene ID" value="ENSG00000162745.11"/>
</dbReference>
<dbReference type="Ensembl" id="ENST00000367938.1">
    <molecule id="Q68BL8-2"/>
    <property type="protein sequence ID" value="ENSP00000356915.1"/>
    <property type="gene ID" value="ENSG00000162745.11"/>
</dbReference>
<dbReference type="GeneID" id="25903"/>
<dbReference type="KEGG" id="hsa:25903"/>
<dbReference type="MANE-Select" id="ENST00000294794.8">
    <property type="protein sequence ID" value="ENSP00000294794.3"/>
    <property type="RefSeq nucleotide sequence ID" value="NM_015441.3"/>
    <property type="RefSeq protein sequence ID" value="NP_056256.1"/>
</dbReference>
<dbReference type="UCSC" id="uc001gbt.4">
    <molecule id="Q68BL8-1"/>
    <property type="organism name" value="human"/>
</dbReference>
<dbReference type="AGR" id="HGNC:24558"/>
<dbReference type="CTD" id="25903"/>
<dbReference type="DisGeNET" id="25903"/>
<dbReference type="GeneCards" id="OLFML2B"/>
<dbReference type="HGNC" id="HGNC:24558">
    <property type="gene designation" value="OLFML2B"/>
</dbReference>
<dbReference type="HPA" id="ENSG00000162745">
    <property type="expression patterns" value="Tissue enhanced (gallbladder)"/>
</dbReference>
<dbReference type="neXtProt" id="NX_Q68BL8"/>
<dbReference type="OpenTargets" id="ENSG00000162745"/>
<dbReference type="PharmGKB" id="PA134990758"/>
<dbReference type="VEuPathDB" id="HostDB:ENSG00000162745"/>
<dbReference type="eggNOG" id="KOG3545">
    <property type="taxonomic scope" value="Eukaryota"/>
</dbReference>
<dbReference type="GeneTree" id="ENSGT00940000157757"/>
<dbReference type="HOGENOM" id="CLU_024107_0_0_1"/>
<dbReference type="InParanoid" id="Q68BL8"/>
<dbReference type="OMA" id="GHCFVIC"/>
<dbReference type="OrthoDB" id="8626508at2759"/>
<dbReference type="PAN-GO" id="Q68BL8">
    <property type="GO annotations" value="2 GO annotations based on evolutionary models"/>
</dbReference>
<dbReference type="PhylomeDB" id="Q68BL8"/>
<dbReference type="TreeFam" id="TF351220"/>
<dbReference type="PathwayCommons" id="Q68BL8"/>
<dbReference type="SignaLink" id="Q68BL8"/>
<dbReference type="BioGRID-ORCS" id="25903">
    <property type="hits" value="9 hits in 1142 CRISPR screens"/>
</dbReference>
<dbReference type="ChiTaRS" id="OLFML2B">
    <property type="organism name" value="human"/>
</dbReference>
<dbReference type="GenomeRNAi" id="25903"/>
<dbReference type="Pharos" id="Q68BL8">
    <property type="development level" value="Tbio"/>
</dbReference>
<dbReference type="PRO" id="PR:Q68BL8"/>
<dbReference type="Proteomes" id="UP000005640">
    <property type="component" value="Chromosome 1"/>
</dbReference>
<dbReference type="RNAct" id="Q68BL8">
    <property type="molecule type" value="protein"/>
</dbReference>
<dbReference type="Bgee" id="ENSG00000162745">
    <property type="expression patterns" value="Expressed in decidua and 164 other cell types or tissues"/>
</dbReference>
<dbReference type="ExpressionAtlas" id="Q68BL8">
    <property type="expression patterns" value="baseline and differential"/>
</dbReference>
<dbReference type="GO" id="GO:0031012">
    <property type="term" value="C:extracellular matrix"/>
    <property type="evidence" value="ECO:0007669"/>
    <property type="project" value="Ensembl"/>
</dbReference>
<dbReference type="GO" id="GO:0005615">
    <property type="term" value="C:extracellular space"/>
    <property type="evidence" value="ECO:0000318"/>
    <property type="project" value="GO_Central"/>
</dbReference>
<dbReference type="GO" id="GO:0050840">
    <property type="term" value="F:extracellular matrix binding"/>
    <property type="evidence" value="ECO:0007669"/>
    <property type="project" value="Ensembl"/>
</dbReference>
<dbReference type="GO" id="GO:0042802">
    <property type="term" value="F:identical protein binding"/>
    <property type="evidence" value="ECO:0007669"/>
    <property type="project" value="Ensembl"/>
</dbReference>
<dbReference type="GO" id="GO:0030198">
    <property type="term" value="P:extracellular matrix organization"/>
    <property type="evidence" value="ECO:0007669"/>
    <property type="project" value="Ensembl"/>
</dbReference>
<dbReference type="GO" id="GO:0007165">
    <property type="term" value="P:signal transduction"/>
    <property type="evidence" value="ECO:0000318"/>
    <property type="project" value="GO_Central"/>
</dbReference>
<dbReference type="InterPro" id="IPR003112">
    <property type="entry name" value="Olfac-like_dom"/>
</dbReference>
<dbReference type="InterPro" id="IPR050605">
    <property type="entry name" value="Olfactomedin-like_domain"/>
</dbReference>
<dbReference type="PANTHER" id="PTHR23192:SF37">
    <property type="entry name" value="OLFACTOMEDIN-LIKE PROTEIN 2B"/>
    <property type="match status" value="1"/>
</dbReference>
<dbReference type="PANTHER" id="PTHR23192">
    <property type="entry name" value="OLFACTOMEDIN-RELATED"/>
    <property type="match status" value="1"/>
</dbReference>
<dbReference type="Pfam" id="PF02191">
    <property type="entry name" value="OLF"/>
    <property type="match status" value="1"/>
</dbReference>
<dbReference type="SMART" id="SM00284">
    <property type="entry name" value="OLF"/>
    <property type="match status" value="1"/>
</dbReference>
<dbReference type="PROSITE" id="PS51132">
    <property type="entry name" value="OLF"/>
    <property type="match status" value="1"/>
</dbReference>
<comment type="subunit">
    <text evidence="1">Homodimer. Binds to heparin and chondroitin sulfate E (By similarity).</text>
</comment>
<comment type="subcellular location">
    <subcellularLocation>
        <location evidence="1">Secreted</location>
    </subcellularLocation>
</comment>
<comment type="alternative products">
    <event type="alternative splicing"/>
    <isoform>
        <id>Q68BL8-1</id>
        <name>1</name>
        <sequence type="displayed"/>
    </isoform>
    <isoform>
        <id>Q68BL8-2</id>
        <name>2</name>
        <sequence type="described" ref="VSP_029564"/>
    </isoform>
</comment>
<comment type="PTM">
    <text evidence="1">O-glycosylated and N-glycosylated.</text>
</comment>
<feature type="signal peptide" evidence="1">
    <location>
        <begin position="1"/>
        <end position="22"/>
    </location>
</feature>
<feature type="chain" id="PRO_0000311426" description="Olfactomedin-like protein 2B">
    <location>
        <begin position="23"/>
        <end position="750"/>
    </location>
</feature>
<feature type="domain" description="Olfactomedin-like" evidence="3">
    <location>
        <begin position="493"/>
        <end position="750"/>
    </location>
</feature>
<feature type="region of interest" description="Disordered" evidence="4">
    <location>
        <begin position="346"/>
        <end position="437"/>
    </location>
</feature>
<feature type="region of interest" description="Disordered" evidence="4">
    <location>
        <begin position="452"/>
        <end position="484"/>
    </location>
</feature>
<feature type="coiled-coil region" evidence="2">
    <location>
        <begin position="40"/>
        <end position="68"/>
    </location>
</feature>
<feature type="coiled-coil region" evidence="2">
    <location>
        <begin position="179"/>
        <end position="213"/>
    </location>
</feature>
<feature type="compositionally biased region" description="Polar residues" evidence="4">
    <location>
        <begin position="354"/>
        <end position="384"/>
    </location>
</feature>
<feature type="compositionally biased region" description="Polar residues" evidence="4">
    <location>
        <begin position="393"/>
        <end position="413"/>
    </location>
</feature>
<feature type="compositionally biased region" description="Low complexity" evidence="4">
    <location>
        <begin position="416"/>
        <end position="430"/>
    </location>
</feature>
<feature type="glycosylation site" description="N-linked (GlcNAc...) asparagine" evidence="2">
    <location>
        <position position="187"/>
    </location>
</feature>
<feature type="glycosylation site" description="N-linked (GlcNAc...) asparagine" evidence="2">
    <location>
        <position position="213"/>
    </location>
</feature>
<feature type="glycosylation site" description="N-linked (GlcNAc...) asparagine" evidence="2">
    <location>
        <position position="695"/>
    </location>
</feature>
<feature type="disulfide bond" evidence="3">
    <location>
        <begin position="494"/>
        <end position="680"/>
    </location>
</feature>
<feature type="splice variant" id="VSP_029564" description="In isoform 2." evidence="7">
    <location>
        <begin position="1"/>
        <end position="517"/>
    </location>
</feature>
<feature type="sequence variant" id="VAR_037248" description="In dbSNP:rs12130792.">
    <original>Y</original>
    <variation>C</variation>
    <location>
        <position position="10"/>
    </location>
</feature>
<feature type="sequence variant" id="VAR_037249" description="In dbSNP:rs2499836." evidence="5 6">
    <original>W</original>
    <variation>R</variation>
    <location>
        <position position="470"/>
    </location>
</feature>
<accession>Q68BL8</accession>
<accession>B7ZA39</accession>
<accession>Q5VU96</accession>
<accession>Q6NX46</accession>
<accession>Q86X11</accession>
<accession>Q9Y3X6</accession>